<proteinExistence type="inferred from homology"/>
<dbReference type="EC" id="2.7.7.2" evidence="1"/>
<dbReference type="EMBL" id="CP000102">
    <property type="protein sequence ID" value="ABC56791.1"/>
    <property type="molecule type" value="Genomic_DNA"/>
</dbReference>
<dbReference type="RefSeq" id="WP_011405991.1">
    <property type="nucleotide sequence ID" value="NC_007681.1"/>
</dbReference>
<dbReference type="SMR" id="Q2NHB2"/>
<dbReference type="STRING" id="339860.Msp_0390"/>
<dbReference type="KEGG" id="mst:Msp_0390"/>
<dbReference type="eggNOG" id="arCOG01222">
    <property type="taxonomic scope" value="Archaea"/>
</dbReference>
<dbReference type="HOGENOM" id="CLU_034585_2_1_2"/>
<dbReference type="OrthoDB" id="1912at2157"/>
<dbReference type="UniPathway" id="UPA00277">
    <property type="reaction ID" value="UER00407"/>
</dbReference>
<dbReference type="Proteomes" id="UP000001931">
    <property type="component" value="Chromosome"/>
</dbReference>
<dbReference type="GO" id="GO:0005524">
    <property type="term" value="F:ATP binding"/>
    <property type="evidence" value="ECO:0007669"/>
    <property type="project" value="UniProtKB-UniRule"/>
</dbReference>
<dbReference type="GO" id="GO:0003919">
    <property type="term" value="F:FMN adenylyltransferase activity"/>
    <property type="evidence" value="ECO:0007669"/>
    <property type="project" value="UniProtKB-UniRule"/>
</dbReference>
<dbReference type="GO" id="GO:0006747">
    <property type="term" value="P:FAD biosynthetic process"/>
    <property type="evidence" value="ECO:0007669"/>
    <property type="project" value="UniProtKB-UniRule"/>
</dbReference>
<dbReference type="GO" id="GO:0046444">
    <property type="term" value="P:FMN metabolic process"/>
    <property type="evidence" value="ECO:0007669"/>
    <property type="project" value="UniProtKB-UniRule"/>
</dbReference>
<dbReference type="Gene3D" id="3.40.50.620">
    <property type="entry name" value="HUPs"/>
    <property type="match status" value="1"/>
</dbReference>
<dbReference type="HAMAP" id="MF_02115">
    <property type="entry name" value="FAD_synth_arch"/>
    <property type="match status" value="1"/>
</dbReference>
<dbReference type="InterPro" id="IPR050385">
    <property type="entry name" value="Archaeal_FAD_synthase"/>
</dbReference>
<dbReference type="InterPro" id="IPR004821">
    <property type="entry name" value="Cyt_trans-like"/>
</dbReference>
<dbReference type="InterPro" id="IPR024902">
    <property type="entry name" value="FAD_synth_RibL"/>
</dbReference>
<dbReference type="InterPro" id="IPR014729">
    <property type="entry name" value="Rossmann-like_a/b/a_fold"/>
</dbReference>
<dbReference type="NCBIfam" id="TIGR00125">
    <property type="entry name" value="cyt_tran_rel"/>
    <property type="match status" value="1"/>
</dbReference>
<dbReference type="PANTHER" id="PTHR43793">
    <property type="entry name" value="FAD SYNTHASE"/>
    <property type="match status" value="1"/>
</dbReference>
<dbReference type="PANTHER" id="PTHR43793:SF1">
    <property type="entry name" value="FAD SYNTHASE"/>
    <property type="match status" value="1"/>
</dbReference>
<dbReference type="Pfam" id="PF01467">
    <property type="entry name" value="CTP_transf_like"/>
    <property type="match status" value="1"/>
</dbReference>
<dbReference type="SUPFAM" id="SSF52374">
    <property type="entry name" value="Nucleotidylyl transferase"/>
    <property type="match status" value="1"/>
</dbReference>
<reference key="1">
    <citation type="journal article" date="2006" name="J. Bacteriol.">
        <title>The genome sequence of Methanosphaera stadtmanae reveals why this human intestinal archaeon is restricted to methanol and H2 for methane formation and ATP synthesis.</title>
        <authorList>
            <person name="Fricke W.F."/>
            <person name="Seedorf H."/>
            <person name="Henne A."/>
            <person name="Kruer M."/>
            <person name="Liesegang H."/>
            <person name="Hedderich R."/>
            <person name="Gottschalk G."/>
            <person name="Thauer R.K."/>
        </authorList>
    </citation>
    <scope>NUCLEOTIDE SEQUENCE [LARGE SCALE GENOMIC DNA]</scope>
    <source>
        <strain>ATCC 43021 / DSM 3091 / JCM 11832 / MCB-3</strain>
    </source>
</reference>
<gene>
    <name evidence="1" type="primary">ribL</name>
    <name type="ordered locus">Msp_0390</name>
</gene>
<comment type="function">
    <text evidence="1">Catalyzes the transfer of the AMP portion of ATP to flavin mononucleotide (FMN) to produce flavin adenine dinucleotide (FAD) coenzyme.</text>
</comment>
<comment type="catalytic activity">
    <reaction evidence="1">
        <text>FMN + ATP + H(+) = FAD + diphosphate</text>
        <dbReference type="Rhea" id="RHEA:17237"/>
        <dbReference type="ChEBI" id="CHEBI:15378"/>
        <dbReference type="ChEBI" id="CHEBI:30616"/>
        <dbReference type="ChEBI" id="CHEBI:33019"/>
        <dbReference type="ChEBI" id="CHEBI:57692"/>
        <dbReference type="ChEBI" id="CHEBI:58210"/>
        <dbReference type="EC" id="2.7.7.2"/>
    </reaction>
</comment>
<comment type="cofactor">
    <cofactor evidence="1">
        <name>a divalent metal cation</name>
        <dbReference type="ChEBI" id="CHEBI:60240"/>
    </cofactor>
</comment>
<comment type="pathway">
    <text evidence="1">Cofactor biosynthesis; FAD biosynthesis; FAD from FMN: step 1/1.</text>
</comment>
<comment type="subunit">
    <text evidence="1">Homodimer.</text>
</comment>
<comment type="similarity">
    <text evidence="1">Belongs to the archaeal FAD synthase family.</text>
</comment>
<protein>
    <recommendedName>
        <fullName evidence="1">FAD synthase</fullName>
        <ecNumber evidence="1">2.7.7.2</ecNumber>
    </recommendedName>
    <alternativeName>
        <fullName evidence="1">FMN adenylyltransferase</fullName>
    </alternativeName>
    <alternativeName>
        <fullName evidence="1">Flavin adenine dinucleotide synthase</fullName>
    </alternativeName>
</protein>
<name>RIBL_METST</name>
<evidence type="ECO:0000255" key="1">
    <source>
        <dbReference type="HAMAP-Rule" id="MF_02115"/>
    </source>
</evidence>
<organism>
    <name type="scientific">Methanosphaera stadtmanae (strain ATCC 43021 / DSM 3091 / JCM 11832 / MCB-3)</name>
    <dbReference type="NCBI Taxonomy" id="339860"/>
    <lineage>
        <taxon>Archaea</taxon>
        <taxon>Methanobacteriati</taxon>
        <taxon>Methanobacteriota</taxon>
        <taxon>Methanomada group</taxon>
        <taxon>Methanobacteria</taxon>
        <taxon>Methanobacteriales</taxon>
        <taxon>Methanobacteriaceae</taxon>
        <taxon>Methanosphaera</taxon>
    </lineage>
</organism>
<sequence length="148" mass="16744">MASGTFDIIHPGHGFYLSESKKLGGDNAILMVVVATDKTVKNHKRVPIVGEKQRCEMVSMLKGVDEAYVGDEKDPFKIVKEKKPDIITIGPDQNFNPDSLHKSLLKKGLDIKVVKINDYKKFELDSSCKIIRKIKQTDFDMDYLENCQ</sequence>
<accession>Q2NHB2</accession>
<keyword id="KW-0067">ATP-binding</keyword>
<keyword id="KW-0274">FAD</keyword>
<keyword id="KW-0285">Flavoprotein</keyword>
<keyword id="KW-0288">FMN</keyword>
<keyword id="KW-0547">Nucleotide-binding</keyword>
<keyword id="KW-0548">Nucleotidyltransferase</keyword>
<keyword id="KW-1185">Reference proteome</keyword>
<keyword id="KW-0808">Transferase</keyword>
<feature type="chain" id="PRO_0000406271" description="FAD synthase">
    <location>
        <begin position="1"/>
        <end position="148"/>
    </location>
</feature>
<feature type="binding site" evidence="1">
    <location>
        <begin position="5"/>
        <end position="6"/>
    </location>
    <ligand>
        <name>ATP</name>
        <dbReference type="ChEBI" id="CHEBI:30616"/>
    </ligand>
</feature>
<feature type="binding site" evidence="1">
    <location>
        <begin position="10"/>
        <end position="13"/>
    </location>
    <ligand>
        <name>ATP</name>
        <dbReference type="ChEBI" id="CHEBI:30616"/>
    </ligand>
</feature>
<feature type="binding site" evidence="1">
    <location>
        <position position="92"/>
    </location>
    <ligand>
        <name>ATP</name>
        <dbReference type="ChEBI" id="CHEBI:30616"/>
    </ligand>
</feature>
<feature type="binding site" evidence="1">
    <location>
        <position position="119"/>
    </location>
    <ligand>
        <name>ATP</name>
        <dbReference type="ChEBI" id="CHEBI:30616"/>
    </ligand>
</feature>